<accession>Q92PY8</accession>
<gene>
    <name evidence="1" type="primary">coaD</name>
    <name type="ordered locus">R01582</name>
    <name type="ORF">SMc01209</name>
</gene>
<evidence type="ECO:0000255" key="1">
    <source>
        <dbReference type="HAMAP-Rule" id="MF_00151"/>
    </source>
</evidence>
<keyword id="KW-0067">ATP-binding</keyword>
<keyword id="KW-0173">Coenzyme A biosynthesis</keyword>
<keyword id="KW-0963">Cytoplasm</keyword>
<keyword id="KW-0460">Magnesium</keyword>
<keyword id="KW-0547">Nucleotide-binding</keyword>
<keyword id="KW-0548">Nucleotidyltransferase</keyword>
<keyword id="KW-1185">Reference proteome</keyword>
<keyword id="KW-0808">Transferase</keyword>
<sequence length="163" mass="17421">MTTAFYPGSFDPITNGHLDVLVQALNVAAKVIVAIGVHPGKAPLFSFDERADLIRAALEETLPERAADISVVSFDNLVVDAAREHGARLLVRGLRDGTDLDYEMQMAGMNRQMAPDIQTLFLPAGTASRPITATLVRQIAAMGGDVSAFVPGAVHQALQAKRK</sequence>
<dbReference type="EC" id="2.7.7.3" evidence="1"/>
<dbReference type="EMBL" id="AL591688">
    <property type="protein sequence ID" value="CAC46161.1"/>
    <property type="molecule type" value="Genomic_DNA"/>
</dbReference>
<dbReference type="RefSeq" id="NP_385688.1">
    <property type="nucleotide sequence ID" value="NC_003047.1"/>
</dbReference>
<dbReference type="RefSeq" id="WP_003529599.1">
    <property type="nucleotide sequence ID" value="NC_003047.1"/>
</dbReference>
<dbReference type="SMR" id="Q92PY8"/>
<dbReference type="EnsemblBacteria" id="CAC46161">
    <property type="protein sequence ID" value="CAC46161"/>
    <property type="gene ID" value="SMc01209"/>
</dbReference>
<dbReference type="KEGG" id="sme:SMc01209"/>
<dbReference type="PATRIC" id="fig|266834.11.peg.3010"/>
<dbReference type="eggNOG" id="COG0669">
    <property type="taxonomic scope" value="Bacteria"/>
</dbReference>
<dbReference type="HOGENOM" id="CLU_100149_0_1_5"/>
<dbReference type="OrthoDB" id="9806661at2"/>
<dbReference type="UniPathway" id="UPA00241">
    <property type="reaction ID" value="UER00355"/>
</dbReference>
<dbReference type="Proteomes" id="UP000001976">
    <property type="component" value="Chromosome"/>
</dbReference>
<dbReference type="GO" id="GO:0005737">
    <property type="term" value="C:cytoplasm"/>
    <property type="evidence" value="ECO:0007669"/>
    <property type="project" value="UniProtKB-SubCell"/>
</dbReference>
<dbReference type="GO" id="GO:0005524">
    <property type="term" value="F:ATP binding"/>
    <property type="evidence" value="ECO:0007669"/>
    <property type="project" value="UniProtKB-KW"/>
</dbReference>
<dbReference type="GO" id="GO:0004595">
    <property type="term" value="F:pantetheine-phosphate adenylyltransferase activity"/>
    <property type="evidence" value="ECO:0007669"/>
    <property type="project" value="UniProtKB-UniRule"/>
</dbReference>
<dbReference type="GO" id="GO:0015937">
    <property type="term" value="P:coenzyme A biosynthetic process"/>
    <property type="evidence" value="ECO:0007669"/>
    <property type="project" value="UniProtKB-UniRule"/>
</dbReference>
<dbReference type="CDD" id="cd02163">
    <property type="entry name" value="PPAT"/>
    <property type="match status" value="1"/>
</dbReference>
<dbReference type="Gene3D" id="3.40.50.620">
    <property type="entry name" value="HUPs"/>
    <property type="match status" value="1"/>
</dbReference>
<dbReference type="HAMAP" id="MF_00151">
    <property type="entry name" value="PPAT_bact"/>
    <property type="match status" value="1"/>
</dbReference>
<dbReference type="InterPro" id="IPR004821">
    <property type="entry name" value="Cyt_trans-like"/>
</dbReference>
<dbReference type="InterPro" id="IPR001980">
    <property type="entry name" value="PPAT"/>
</dbReference>
<dbReference type="InterPro" id="IPR014729">
    <property type="entry name" value="Rossmann-like_a/b/a_fold"/>
</dbReference>
<dbReference type="NCBIfam" id="TIGR01510">
    <property type="entry name" value="coaD_prev_kdtB"/>
    <property type="match status" value="1"/>
</dbReference>
<dbReference type="NCBIfam" id="TIGR00125">
    <property type="entry name" value="cyt_tran_rel"/>
    <property type="match status" value="1"/>
</dbReference>
<dbReference type="PANTHER" id="PTHR21342">
    <property type="entry name" value="PHOSPHOPANTETHEINE ADENYLYLTRANSFERASE"/>
    <property type="match status" value="1"/>
</dbReference>
<dbReference type="PANTHER" id="PTHR21342:SF1">
    <property type="entry name" value="PHOSPHOPANTETHEINE ADENYLYLTRANSFERASE"/>
    <property type="match status" value="1"/>
</dbReference>
<dbReference type="Pfam" id="PF01467">
    <property type="entry name" value="CTP_transf_like"/>
    <property type="match status" value="1"/>
</dbReference>
<dbReference type="PRINTS" id="PR01020">
    <property type="entry name" value="LPSBIOSNTHSS"/>
</dbReference>
<dbReference type="SUPFAM" id="SSF52374">
    <property type="entry name" value="Nucleotidylyl transferase"/>
    <property type="match status" value="1"/>
</dbReference>
<organism>
    <name type="scientific">Rhizobium meliloti (strain 1021)</name>
    <name type="common">Ensifer meliloti</name>
    <name type="synonym">Sinorhizobium meliloti</name>
    <dbReference type="NCBI Taxonomy" id="266834"/>
    <lineage>
        <taxon>Bacteria</taxon>
        <taxon>Pseudomonadati</taxon>
        <taxon>Pseudomonadota</taxon>
        <taxon>Alphaproteobacteria</taxon>
        <taxon>Hyphomicrobiales</taxon>
        <taxon>Rhizobiaceae</taxon>
        <taxon>Sinorhizobium/Ensifer group</taxon>
        <taxon>Sinorhizobium</taxon>
    </lineage>
</organism>
<protein>
    <recommendedName>
        <fullName evidence="1">Phosphopantetheine adenylyltransferase</fullName>
        <ecNumber evidence="1">2.7.7.3</ecNumber>
    </recommendedName>
    <alternativeName>
        <fullName evidence="1">Dephospho-CoA pyrophosphorylase</fullName>
    </alternativeName>
    <alternativeName>
        <fullName evidence="1">Pantetheine-phosphate adenylyltransferase</fullName>
        <shortName evidence="1">PPAT</shortName>
    </alternativeName>
</protein>
<name>COAD_RHIME</name>
<reference key="1">
    <citation type="journal article" date="2001" name="Proc. Natl. Acad. Sci. U.S.A.">
        <title>Analysis of the chromosome sequence of the legume symbiont Sinorhizobium meliloti strain 1021.</title>
        <authorList>
            <person name="Capela D."/>
            <person name="Barloy-Hubler F."/>
            <person name="Gouzy J."/>
            <person name="Bothe G."/>
            <person name="Ampe F."/>
            <person name="Batut J."/>
            <person name="Boistard P."/>
            <person name="Becker A."/>
            <person name="Boutry M."/>
            <person name="Cadieu E."/>
            <person name="Dreano S."/>
            <person name="Gloux S."/>
            <person name="Godrie T."/>
            <person name="Goffeau A."/>
            <person name="Kahn D."/>
            <person name="Kiss E."/>
            <person name="Lelaure V."/>
            <person name="Masuy D."/>
            <person name="Pohl T."/>
            <person name="Portetelle D."/>
            <person name="Puehler A."/>
            <person name="Purnelle B."/>
            <person name="Ramsperger U."/>
            <person name="Renard C."/>
            <person name="Thebault P."/>
            <person name="Vandenbol M."/>
            <person name="Weidner S."/>
            <person name="Galibert F."/>
        </authorList>
    </citation>
    <scope>NUCLEOTIDE SEQUENCE [LARGE SCALE GENOMIC DNA]</scope>
    <source>
        <strain>1021</strain>
    </source>
</reference>
<reference key="2">
    <citation type="journal article" date="2001" name="Science">
        <title>The composite genome of the legume symbiont Sinorhizobium meliloti.</title>
        <authorList>
            <person name="Galibert F."/>
            <person name="Finan T.M."/>
            <person name="Long S.R."/>
            <person name="Puehler A."/>
            <person name="Abola P."/>
            <person name="Ampe F."/>
            <person name="Barloy-Hubler F."/>
            <person name="Barnett M.J."/>
            <person name="Becker A."/>
            <person name="Boistard P."/>
            <person name="Bothe G."/>
            <person name="Boutry M."/>
            <person name="Bowser L."/>
            <person name="Buhrmester J."/>
            <person name="Cadieu E."/>
            <person name="Capela D."/>
            <person name="Chain P."/>
            <person name="Cowie A."/>
            <person name="Davis R.W."/>
            <person name="Dreano S."/>
            <person name="Federspiel N.A."/>
            <person name="Fisher R.F."/>
            <person name="Gloux S."/>
            <person name="Godrie T."/>
            <person name="Goffeau A."/>
            <person name="Golding B."/>
            <person name="Gouzy J."/>
            <person name="Gurjal M."/>
            <person name="Hernandez-Lucas I."/>
            <person name="Hong A."/>
            <person name="Huizar L."/>
            <person name="Hyman R.W."/>
            <person name="Jones T."/>
            <person name="Kahn D."/>
            <person name="Kahn M.L."/>
            <person name="Kalman S."/>
            <person name="Keating D.H."/>
            <person name="Kiss E."/>
            <person name="Komp C."/>
            <person name="Lelaure V."/>
            <person name="Masuy D."/>
            <person name="Palm C."/>
            <person name="Peck M.C."/>
            <person name="Pohl T.M."/>
            <person name="Portetelle D."/>
            <person name="Purnelle B."/>
            <person name="Ramsperger U."/>
            <person name="Surzycki R."/>
            <person name="Thebault P."/>
            <person name="Vandenbol M."/>
            <person name="Vorhoelter F.J."/>
            <person name="Weidner S."/>
            <person name="Wells D.H."/>
            <person name="Wong K."/>
            <person name="Yeh K.-C."/>
            <person name="Batut J."/>
        </authorList>
    </citation>
    <scope>NUCLEOTIDE SEQUENCE [LARGE SCALE GENOMIC DNA]</scope>
    <source>
        <strain>1021</strain>
    </source>
</reference>
<feature type="chain" id="PRO_0000156263" description="Phosphopantetheine adenylyltransferase">
    <location>
        <begin position="1"/>
        <end position="163"/>
    </location>
</feature>
<feature type="binding site" evidence="1">
    <location>
        <begin position="9"/>
        <end position="10"/>
    </location>
    <ligand>
        <name>ATP</name>
        <dbReference type="ChEBI" id="CHEBI:30616"/>
    </ligand>
</feature>
<feature type="binding site" evidence="1">
    <location>
        <position position="9"/>
    </location>
    <ligand>
        <name>substrate</name>
    </ligand>
</feature>
<feature type="binding site" evidence="1">
    <location>
        <position position="17"/>
    </location>
    <ligand>
        <name>ATP</name>
        <dbReference type="ChEBI" id="CHEBI:30616"/>
    </ligand>
</feature>
<feature type="binding site" evidence="1">
    <location>
        <position position="41"/>
    </location>
    <ligand>
        <name>substrate</name>
    </ligand>
</feature>
<feature type="binding site" evidence="1">
    <location>
        <position position="78"/>
    </location>
    <ligand>
        <name>substrate</name>
    </ligand>
</feature>
<feature type="binding site" evidence="1">
    <location>
        <position position="92"/>
    </location>
    <ligand>
        <name>substrate</name>
    </ligand>
</feature>
<feature type="binding site" evidence="1">
    <location>
        <begin position="93"/>
        <end position="95"/>
    </location>
    <ligand>
        <name>ATP</name>
        <dbReference type="ChEBI" id="CHEBI:30616"/>
    </ligand>
</feature>
<feature type="binding site" evidence="1">
    <location>
        <position position="103"/>
    </location>
    <ligand>
        <name>ATP</name>
        <dbReference type="ChEBI" id="CHEBI:30616"/>
    </ligand>
</feature>
<feature type="binding site" evidence="1">
    <location>
        <begin position="128"/>
        <end position="134"/>
    </location>
    <ligand>
        <name>ATP</name>
        <dbReference type="ChEBI" id="CHEBI:30616"/>
    </ligand>
</feature>
<feature type="site" description="Transition state stabilizer" evidence="1">
    <location>
        <position position="17"/>
    </location>
</feature>
<proteinExistence type="inferred from homology"/>
<comment type="function">
    <text evidence="1">Reversibly transfers an adenylyl group from ATP to 4'-phosphopantetheine, yielding dephospho-CoA (dPCoA) and pyrophosphate.</text>
</comment>
<comment type="catalytic activity">
    <reaction evidence="1">
        <text>(R)-4'-phosphopantetheine + ATP + H(+) = 3'-dephospho-CoA + diphosphate</text>
        <dbReference type="Rhea" id="RHEA:19801"/>
        <dbReference type="ChEBI" id="CHEBI:15378"/>
        <dbReference type="ChEBI" id="CHEBI:30616"/>
        <dbReference type="ChEBI" id="CHEBI:33019"/>
        <dbReference type="ChEBI" id="CHEBI:57328"/>
        <dbReference type="ChEBI" id="CHEBI:61723"/>
        <dbReference type="EC" id="2.7.7.3"/>
    </reaction>
</comment>
<comment type="cofactor">
    <cofactor evidence="1">
        <name>Mg(2+)</name>
        <dbReference type="ChEBI" id="CHEBI:18420"/>
    </cofactor>
</comment>
<comment type="pathway">
    <text evidence="1">Cofactor biosynthesis; coenzyme A biosynthesis; CoA from (R)-pantothenate: step 4/5.</text>
</comment>
<comment type="subunit">
    <text evidence="1">Homohexamer.</text>
</comment>
<comment type="subcellular location">
    <subcellularLocation>
        <location evidence="1">Cytoplasm</location>
    </subcellularLocation>
</comment>
<comment type="similarity">
    <text evidence="1">Belongs to the bacterial CoaD family.</text>
</comment>